<evidence type="ECO:0000256" key="1">
    <source>
        <dbReference type="SAM" id="MobiDB-lite"/>
    </source>
</evidence>
<evidence type="ECO:0000305" key="2"/>
<sequence length="343" mass="39324">MGNTVTCCVSPDASPKAGRDRRVAERGEPYQTQVELQETDPGPHLQHISDRDFPSDFNDECNPSDHPQASTIFLSKSQTDVREKRKSNHINHVSPGQLTKKYSSCSTIFLDDSTVSQPNLRSTIKCVTLAIYYHIKNRDSDRSLDIFDEKLHPLTREEVTDDYCKHDPDHKHIYRFVRTLFSAAQLTAECAIVTLVYLERLLTYAEIDICPSNWKRIVLGAILLASKVWDDQAVWNVDYCQILKDITVEDMNEMERHFLELLQFNINVPASVYAKYYFDLRSLADDNNLSFLLEPLSKERAQKLEAISRLCEDKYKDLSKAAMRRSISADNLVGIRRSNAIIS</sequence>
<dbReference type="EMBL" id="BC070798">
    <property type="protein sequence ID" value="AAH70798.1"/>
    <property type="molecule type" value="mRNA"/>
</dbReference>
<dbReference type="RefSeq" id="NP_001084816.1">
    <property type="nucleotide sequence ID" value="NM_001091347.1"/>
</dbReference>
<dbReference type="SMR" id="Q6NRF4"/>
<dbReference type="DNASU" id="431857"/>
<dbReference type="GeneID" id="431857"/>
<dbReference type="KEGG" id="xla:431857"/>
<dbReference type="AGR" id="Xenbase:XB-GENE-5957713"/>
<dbReference type="CTD" id="431857"/>
<dbReference type="Xenbase" id="XB-GENE-5957713">
    <property type="gene designation" value="ccnyl1.L"/>
</dbReference>
<dbReference type="OMA" id="RWADAYQ"/>
<dbReference type="OrthoDB" id="10250320at2759"/>
<dbReference type="Proteomes" id="UP000186698">
    <property type="component" value="Chromosome 9_10L"/>
</dbReference>
<dbReference type="Bgee" id="431857">
    <property type="expression patterns" value="Expressed in blastula and 19 other cell types or tissues"/>
</dbReference>
<dbReference type="GO" id="GO:0005886">
    <property type="term" value="C:plasma membrane"/>
    <property type="evidence" value="ECO:0000318"/>
    <property type="project" value="GO_Central"/>
</dbReference>
<dbReference type="GO" id="GO:0019901">
    <property type="term" value="F:protein kinase binding"/>
    <property type="evidence" value="ECO:0007669"/>
    <property type="project" value="InterPro"/>
</dbReference>
<dbReference type="GO" id="GO:0060828">
    <property type="term" value="P:regulation of canonical Wnt signaling pathway"/>
    <property type="evidence" value="ECO:0000318"/>
    <property type="project" value="GO_Central"/>
</dbReference>
<dbReference type="CDD" id="cd20540">
    <property type="entry name" value="CYCLIN_CCNY_like"/>
    <property type="match status" value="1"/>
</dbReference>
<dbReference type="FunFam" id="1.10.472.10:FF:000011">
    <property type="entry name" value="Cyclin-Y isoform 1"/>
    <property type="match status" value="1"/>
</dbReference>
<dbReference type="Gene3D" id="1.10.472.10">
    <property type="entry name" value="Cyclin-like"/>
    <property type="match status" value="1"/>
</dbReference>
<dbReference type="InterPro" id="IPR013763">
    <property type="entry name" value="Cyclin-like_dom"/>
</dbReference>
<dbReference type="InterPro" id="IPR036915">
    <property type="entry name" value="Cyclin-like_sf"/>
</dbReference>
<dbReference type="InterPro" id="IPR006671">
    <property type="entry name" value="Cyclin_N"/>
</dbReference>
<dbReference type="InterPro" id="IPR012399">
    <property type="entry name" value="Cyclin_Y"/>
</dbReference>
<dbReference type="PANTHER" id="PTHR14248">
    <property type="entry name" value="CYCLIN Y, ISOFORM A"/>
    <property type="match status" value="1"/>
</dbReference>
<dbReference type="Pfam" id="PF00134">
    <property type="entry name" value="Cyclin_N"/>
    <property type="match status" value="1"/>
</dbReference>
<dbReference type="PIRSF" id="PIRSF028934">
    <property type="entry name" value="Cyclin_CG14939"/>
    <property type="match status" value="1"/>
</dbReference>
<dbReference type="SMART" id="SM00385">
    <property type="entry name" value="CYCLIN"/>
    <property type="match status" value="1"/>
</dbReference>
<dbReference type="SUPFAM" id="SSF47954">
    <property type="entry name" value="Cyclin-like"/>
    <property type="match status" value="1"/>
</dbReference>
<keyword id="KW-0195">Cyclin</keyword>
<keyword id="KW-1185">Reference proteome</keyword>
<comment type="similarity">
    <text evidence="2">Belongs to the cyclin family. Cyclin Y subfamily.</text>
</comment>
<protein>
    <recommendedName>
        <fullName>Cyclin-Y-like protein 1-B</fullName>
    </recommendedName>
</protein>
<organism>
    <name type="scientific">Xenopus laevis</name>
    <name type="common">African clawed frog</name>
    <dbReference type="NCBI Taxonomy" id="8355"/>
    <lineage>
        <taxon>Eukaryota</taxon>
        <taxon>Metazoa</taxon>
        <taxon>Chordata</taxon>
        <taxon>Craniata</taxon>
        <taxon>Vertebrata</taxon>
        <taxon>Euteleostomi</taxon>
        <taxon>Amphibia</taxon>
        <taxon>Batrachia</taxon>
        <taxon>Anura</taxon>
        <taxon>Pipoidea</taxon>
        <taxon>Pipidae</taxon>
        <taxon>Xenopodinae</taxon>
        <taxon>Xenopus</taxon>
        <taxon>Xenopus</taxon>
    </lineage>
</organism>
<proteinExistence type="evidence at transcript level"/>
<accession>Q6NRF4</accession>
<gene>
    <name type="primary">ccnyl1-b</name>
</gene>
<reference key="1">
    <citation type="submission" date="2004-05" db="EMBL/GenBank/DDBJ databases">
        <authorList>
            <consortium name="NIH - Xenopus Gene Collection (XGC) project"/>
        </authorList>
    </citation>
    <scope>NUCLEOTIDE SEQUENCE [LARGE SCALE MRNA]</scope>
    <source>
        <tissue>Oocyte</tissue>
    </source>
</reference>
<name>CCY1B_XENLA</name>
<feature type="chain" id="PRO_0000309324" description="Cyclin-Y-like protein 1-B">
    <location>
        <begin position="1"/>
        <end position="343"/>
    </location>
</feature>
<feature type="domain" description="Cyclin N-terminal">
    <location>
        <begin position="145"/>
        <end position="267"/>
    </location>
</feature>
<feature type="region of interest" description="Disordered" evidence="1">
    <location>
        <begin position="1"/>
        <end position="69"/>
    </location>
</feature>
<feature type="compositionally biased region" description="Basic and acidic residues" evidence="1">
    <location>
        <begin position="17"/>
        <end position="28"/>
    </location>
</feature>